<sequence>MADDMVYQEAVAAEVIQVSGRTGVTGEIFQVRCKILGGKDTGRILTRNVKGPVKVGDLIMLRETEREAKQLGKRRK</sequence>
<comment type="similarity">
    <text evidence="1">Belongs to the eukaryotic ribosomal protein eS28 family.</text>
</comment>
<gene>
    <name evidence="1" type="primary">rps28e</name>
    <name type="ordered locus">Mevan_1554</name>
</gene>
<accession>A6USH4</accession>
<keyword id="KW-0687">Ribonucleoprotein</keyword>
<keyword id="KW-0689">Ribosomal protein</keyword>
<evidence type="ECO:0000255" key="1">
    <source>
        <dbReference type="HAMAP-Rule" id="MF_00292"/>
    </source>
</evidence>
<evidence type="ECO:0000305" key="2"/>
<proteinExistence type="inferred from homology"/>
<name>RS28_METVS</name>
<feature type="chain" id="PRO_1000004123" description="Small ribosomal subunit protein eS28">
    <location>
        <begin position="1"/>
        <end position="76"/>
    </location>
</feature>
<reference key="1">
    <citation type="submission" date="2007-06" db="EMBL/GenBank/DDBJ databases">
        <title>Complete sequence of Methanococcus vannielii SB.</title>
        <authorList>
            <consortium name="US DOE Joint Genome Institute"/>
            <person name="Copeland A."/>
            <person name="Lucas S."/>
            <person name="Lapidus A."/>
            <person name="Barry K."/>
            <person name="Glavina del Rio T."/>
            <person name="Dalin E."/>
            <person name="Tice H."/>
            <person name="Pitluck S."/>
            <person name="Chain P."/>
            <person name="Malfatti S."/>
            <person name="Shin M."/>
            <person name="Vergez L."/>
            <person name="Schmutz J."/>
            <person name="Larimer F."/>
            <person name="Land M."/>
            <person name="Hauser L."/>
            <person name="Kyrpides N."/>
            <person name="Anderson I."/>
            <person name="Sieprawska-Lupa M."/>
            <person name="Whitman W.B."/>
            <person name="Richardson P."/>
        </authorList>
    </citation>
    <scope>NUCLEOTIDE SEQUENCE [LARGE SCALE GENOMIC DNA]</scope>
    <source>
        <strain>ATCC 35089 / DSM 1224 / JCM 13029 / OCM 148 / SB</strain>
    </source>
</reference>
<organism>
    <name type="scientific">Methanococcus vannielii (strain ATCC 35089 / DSM 1224 / JCM 13029 / OCM 148 / SB)</name>
    <dbReference type="NCBI Taxonomy" id="406327"/>
    <lineage>
        <taxon>Archaea</taxon>
        <taxon>Methanobacteriati</taxon>
        <taxon>Methanobacteriota</taxon>
        <taxon>Methanomada group</taxon>
        <taxon>Methanococci</taxon>
        <taxon>Methanococcales</taxon>
        <taxon>Methanococcaceae</taxon>
        <taxon>Methanococcus</taxon>
    </lineage>
</organism>
<protein>
    <recommendedName>
        <fullName evidence="1">Small ribosomal subunit protein eS28</fullName>
    </recommendedName>
    <alternativeName>
        <fullName evidence="2">30S ribosomal protein S28e</fullName>
    </alternativeName>
</protein>
<dbReference type="EMBL" id="CP000742">
    <property type="protein sequence ID" value="ABR55446.1"/>
    <property type="molecule type" value="Genomic_DNA"/>
</dbReference>
<dbReference type="RefSeq" id="WP_012066360.1">
    <property type="nucleotide sequence ID" value="NC_009634.1"/>
</dbReference>
<dbReference type="SMR" id="A6USH4"/>
<dbReference type="STRING" id="406327.Mevan_1554"/>
<dbReference type="GeneID" id="5325848"/>
<dbReference type="KEGG" id="mvn:Mevan_1554"/>
<dbReference type="eggNOG" id="arCOG04314">
    <property type="taxonomic scope" value="Archaea"/>
</dbReference>
<dbReference type="HOGENOM" id="CLU_178987_2_1_2"/>
<dbReference type="OrthoDB" id="7620at2157"/>
<dbReference type="Proteomes" id="UP000001107">
    <property type="component" value="Chromosome"/>
</dbReference>
<dbReference type="GO" id="GO:0022627">
    <property type="term" value="C:cytosolic small ribosomal subunit"/>
    <property type="evidence" value="ECO:0007669"/>
    <property type="project" value="TreeGrafter"/>
</dbReference>
<dbReference type="GO" id="GO:0003735">
    <property type="term" value="F:structural constituent of ribosome"/>
    <property type="evidence" value="ECO:0007669"/>
    <property type="project" value="InterPro"/>
</dbReference>
<dbReference type="GO" id="GO:0030490">
    <property type="term" value="P:maturation of SSU-rRNA"/>
    <property type="evidence" value="ECO:0007669"/>
    <property type="project" value="TreeGrafter"/>
</dbReference>
<dbReference type="GO" id="GO:0000028">
    <property type="term" value="P:ribosomal small subunit assembly"/>
    <property type="evidence" value="ECO:0007669"/>
    <property type="project" value="TreeGrafter"/>
</dbReference>
<dbReference type="GO" id="GO:0006412">
    <property type="term" value="P:translation"/>
    <property type="evidence" value="ECO:0007669"/>
    <property type="project" value="UniProtKB-UniRule"/>
</dbReference>
<dbReference type="CDD" id="cd04457">
    <property type="entry name" value="S1_S28E"/>
    <property type="match status" value="1"/>
</dbReference>
<dbReference type="FunFam" id="2.40.50.140:FF:000145">
    <property type="entry name" value="30S ribosomal protein S28e"/>
    <property type="match status" value="1"/>
</dbReference>
<dbReference type="Gene3D" id="2.40.50.140">
    <property type="entry name" value="Nucleic acid-binding proteins"/>
    <property type="match status" value="1"/>
</dbReference>
<dbReference type="HAMAP" id="MF_00292">
    <property type="entry name" value="Ribosomal_eS28"/>
    <property type="match status" value="1"/>
</dbReference>
<dbReference type="InterPro" id="IPR012340">
    <property type="entry name" value="NA-bd_OB-fold"/>
</dbReference>
<dbReference type="InterPro" id="IPR000289">
    <property type="entry name" value="Ribosomal_eS28"/>
</dbReference>
<dbReference type="InterPro" id="IPR028626">
    <property type="entry name" value="Ribosomal_eS28_CS"/>
</dbReference>
<dbReference type="NCBIfam" id="NF003080">
    <property type="entry name" value="PRK04007.1"/>
    <property type="match status" value="1"/>
</dbReference>
<dbReference type="PANTHER" id="PTHR10769">
    <property type="entry name" value="40S RIBOSOMAL PROTEIN S28"/>
    <property type="match status" value="1"/>
</dbReference>
<dbReference type="PANTHER" id="PTHR10769:SF3">
    <property type="entry name" value="SMALL RIBOSOMAL SUBUNIT PROTEIN ES28"/>
    <property type="match status" value="1"/>
</dbReference>
<dbReference type="Pfam" id="PF01200">
    <property type="entry name" value="Ribosomal_S28e"/>
    <property type="match status" value="1"/>
</dbReference>
<dbReference type="SUPFAM" id="SSF50249">
    <property type="entry name" value="Nucleic acid-binding proteins"/>
    <property type="match status" value="1"/>
</dbReference>
<dbReference type="PROSITE" id="PS00961">
    <property type="entry name" value="RIBOSOMAL_S28E"/>
    <property type="match status" value="1"/>
</dbReference>